<accession>B1X7C5</accession>
<keyword id="KW-0175">Coiled coil</keyword>
<keyword id="KW-0574">Periplasm</keyword>
<keyword id="KW-0732">Signal</keyword>
<organism>
    <name type="scientific">Escherichia coli (strain K12 / DH10B)</name>
    <dbReference type="NCBI Taxonomy" id="316385"/>
    <lineage>
        <taxon>Bacteria</taxon>
        <taxon>Pseudomonadati</taxon>
        <taxon>Pseudomonadota</taxon>
        <taxon>Gammaproteobacteria</taxon>
        <taxon>Enterobacterales</taxon>
        <taxon>Enterobacteriaceae</taxon>
        <taxon>Escherichia</taxon>
    </lineage>
</organism>
<dbReference type="EMBL" id="CP000948">
    <property type="protein sequence ID" value="ACB01996.1"/>
    <property type="molecule type" value="Genomic_DNA"/>
</dbReference>
<dbReference type="SMR" id="B1X7C5"/>
<dbReference type="KEGG" id="ecd:ECDH10B_0863"/>
<dbReference type="HOGENOM" id="CLU_018816_6_3_6"/>
<dbReference type="GO" id="GO:0042597">
    <property type="term" value="C:periplasmic space"/>
    <property type="evidence" value="ECO:0007669"/>
    <property type="project" value="UniProtKB-SubCell"/>
</dbReference>
<dbReference type="FunFam" id="1.10.287.470:FF:000004">
    <property type="entry name" value="UPF0194 membrane protein YbhG"/>
    <property type="match status" value="1"/>
</dbReference>
<dbReference type="FunFam" id="2.40.30.170:FF:000005">
    <property type="entry name" value="UPF0194 membrane protein YbhG"/>
    <property type="match status" value="1"/>
</dbReference>
<dbReference type="FunFam" id="2.40.50.100:FF:000025">
    <property type="entry name" value="UPF0194 membrane protein YbhG"/>
    <property type="match status" value="1"/>
</dbReference>
<dbReference type="Gene3D" id="2.40.30.170">
    <property type="match status" value="1"/>
</dbReference>
<dbReference type="Gene3D" id="2.40.50.100">
    <property type="match status" value="2"/>
</dbReference>
<dbReference type="Gene3D" id="1.10.287.470">
    <property type="entry name" value="Helix hairpin bin"/>
    <property type="match status" value="1"/>
</dbReference>
<dbReference type="HAMAP" id="MF_01304">
    <property type="entry name" value="UPF0194"/>
    <property type="match status" value="1"/>
</dbReference>
<dbReference type="InterPro" id="IPR032317">
    <property type="entry name" value="CusB_D23"/>
</dbReference>
<dbReference type="InterPro" id="IPR022936">
    <property type="entry name" value="UPF0194_membrane_YbhG"/>
</dbReference>
<dbReference type="InterPro" id="IPR050465">
    <property type="entry name" value="UPF0194_transport"/>
</dbReference>
<dbReference type="NCBIfam" id="NF002939">
    <property type="entry name" value="PRK03598.1"/>
    <property type="match status" value="1"/>
</dbReference>
<dbReference type="PANTHER" id="PTHR32347">
    <property type="entry name" value="EFFLUX SYSTEM COMPONENT YKNX-RELATED"/>
    <property type="match status" value="1"/>
</dbReference>
<dbReference type="PANTHER" id="PTHR32347:SF29">
    <property type="entry name" value="UPF0194 MEMBRANE PROTEIN YBHG"/>
    <property type="match status" value="1"/>
</dbReference>
<dbReference type="Pfam" id="PF16576">
    <property type="entry name" value="HlyD_D23"/>
    <property type="match status" value="1"/>
</dbReference>
<dbReference type="SUPFAM" id="SSF111369">
    <property type="entry name" value="HlyD-like secretion proteins"/>
    <property type="match status" value="2"/>
</dbReference>
<dbReference type="SUPFAM" id="SSF56954">
    <property type="entry name" value="Outer membrane efflux proteins (OEP)"/>
    <property type="match status" value="1"/>
</dbReference>
<evidence type="ECO:0000255" key="1">
    <source>
        <dbReference type="HAMAP-Rule" id="MF_01304"/>
    </source>
</evidence>
<comment type="subcellular location">
    <subcellularLocation>
        <location evidence="1">Periplasm</location>
    </subcellularLocation>
</comment>
<comment type="similarity">
    <text evidence="1">Belongs to the UPF0194 family.</text>
</comment>
<gene>
    <name evidence="1" type="primary">ybhG</name>
    <name type="ordered locus">ECDH10B_0863</name>
</gene>
<protein>
    <recommendedName>
        <fullName evidence="1">UPF0194 membrane protein YbhG</fullName>
    </recommendedName>
</protein>
<proteinExistence type="inferred from homology"/>
<sequence length="332" mass="36416">MMKKPVVIGLAVVVLAAVVAGGYWWYQSRQDNGLTLYGNVDIRTVNLSFRVGGRVESLAVDEGDAIKAGQVLGELDHKPYEIALMQAKAGVSVAQAQYDLMLAGYRNEEIAQAAAAVKQAQAAYDYAQNFYNRQQGLWKSRTISANDLENARSSRDQAQATLKSAQDKLRQYRSGNREQDIAQAKASLEQAQAQLAQAELNLQDSTLIAPSDGTLLTRAVEPGTVLNEGGTVFTVSLTRPVWVRAYVDERNLDQAQPGRKVLLYTDGRPDKPYHGQIGFVSPTAEFTPKTVETPDLRTDLVYRLRIVVTDADDALRQGMPVTVQFGDEAGHE</sequence>
<feature type="signal peptide" evidence="1">
    <location>
        <begin position="1"/>
        <end position="16"/>
    </location>
</feature>
<feature type="chain" id="PRO_1000140652" description="UPF0194 membrane protein YbhG">
    <location>
        <begin position="17"/>
        <end position="332"/>
    </location>
</feature>
<feature type="coiled-coil region" evidence="1">
    <location>
        <begin position="107"/>
        <end position="209"/>
    </location>
</feature>
<name>YBHG_ECODH</name>
<reference key="1">
    <citation type="journal article" date="2008" name="J. Bacteriol.">
        <title>The complete genome sequence of Escherichia coli DH10B: insights into the biology of a laboratory workhorse.</title>
        <authorList>
            <person name="Durfee T."/>
            <person name="Nelson R."/>
            <person name="Baldwin S."/>
            <person name="Plunkett G. III"/>
            <person name="Burland V."/>
            <person name="Mau B."/>
            <person name="Petrosino J.F."/>
            <person name="Qin X."/>
            <person name="Muzny D.M."/>
            <person name="Ayele M."/>
            <person name="Gibbs R.A."/>
            <person name="Csorgo B."/>
            <person name="Posfai G."/>
            <person name="Weinstock G.M."/>
            <person name="Blattner F.R."/>
        </authorList>
    </citation>
    <scope>NUCLEOTIDE SEQUENCE [LARGE SCALE GENOMIC DNA]</scope>
    <source>
        <strain>K12 / DH10B</strain>
    </source>
</reference>